<proteinExistence type="inferred from homology"/>
<organism>
    <name type="scientific">Blochmanniella floridana</name>
    <dbReference type="NCBI Taxonomy" id="203907"/>
    <lineage>
        <taxon>Bacteria</taxon>
        <taxon>Pseudomonadati</taxon>
        <taxon>Pseudomonadota</taxon>
        <taxon>Gammaproteobacteria</taxon>
        <taxon>Enterobacterales</taxon>
        <taxon>Enterobacteriaceae</taxon>
        <taxon>ant endosymbionts</taxon>
        <taxon>Candidatus Blochmanniella</taxon>
    </lineage>
</organism>
<gene>
    <name type="ordered locus">Bfl013</name>
</gene>
<name>YIDD_BLOFL</name>
<evidence type="ECO:0000255" key="1">
    <source>
        <dbReference type="HAMAP-Rule" id="MF_00386"/>
    </source>
</evidence>
<accession>Q7VQV2</accession>
<protein>
    <recommendedName>
        <fullName evidence="1">Putative membrane protein insertion efficiency factor</fullName>
    </recommendedName>
</protein>
<dbReference type="EMBL" id="BX248583">
    <property type="protein sequence ID" value="CAD83541.1"/>
    <property type="molecule type" value="Genomic_DNA"/>
</dbReference>
<dbReference type="STRING" id="203907.Bfl013"/>
<dbReference type="KEGG" id="bfl:Bfl013"/>
<dbReference type="eggNOG" id="COG0759">
    <property type="taxonomic scope" value="Bacteria"/>
</dbReference>
<dbReference type="HOGENOM" id="CLU_144811_6_1_6"/>
<dbReference type="OrthoDB" id="9801753at2"/>
<dbReference type="Proteomes" id="UP000002192">
    <property type="component" value="Chromosome"/>
</dbReference>
<dbReference type="GO" id="GO:0005886">
    <property type="term" value="C:plasma membrane"/>
    <property type="evidence" value="ECO:0007669"/>
    <property type="project" value="UniProtKB-SubCell"/>
</dbReference>
<dbReference type="HAMAP" id="MF_00386">
    <property type="entry name" value="UPF0161_YidD"/>
    <property type="match status" value="1"/>
</dbReference>
<dbReference type="InterPro" id="IPR002696">
    <property type="entry name" value="Membr_insert_effic_factor_YidD"/>
</dbReference>
<dbReference type="NCBIfam" id="TIGR00278">
    <property type="entry name" value="membrane protein insertion efficiency factor YidD"/>
    <property type="match status" value="1"/>
</dbReference>
<dbReference type="PANTHER" id="PTHR33383">
    <property type="entry name" value="MEMBRANE PROTEIN INSERTION EFFICIENCY FACTOR-RELATED"/>
    <property type="match status" value="1"/>
</dbReference>
<dbReference type="PANTHER" id="PTHR33383:SF1">
    <property type="entry name" value="MEMBRANE PROTEIN INSERTION EFFICIENCY FACTOR-RELATED"/>
    <property type="match status" value="1"/>
</dbReference>
<dbReference type="Pfam" id="PF01809">
    <property type="entry name" value="YidD"/>
    <property type="match status" value="1"/>
</dbReference>
<dbReference type="SMART" id="SM01234">
    <property type="entry name" value="Haemolytic"/>
    <property type="match status" value="1"/>
</dbReference>
<feature type="chain" id="PRO_0000171806" description="Putative membrane protein insertion efficiency factor">
    <location>
        <begin position="1"/>
        <end position="74"/>
    </location>
</feature>
<keyword id="KW-0997">Cell inner membrane</keyword>
<keyword id="KW-1003">Cell membrane</keyword>
<keyword id="KW-0472">Membrane</keyword>
<keyword id="KW-1185">Reference proteome</keyword>
<sequence>MVSLPKLSAKIIIRLIYIYQIGISPILGHHCRFSITCSQYGINSIRNFGILKGCWKTCIRILKCHPFNKNDNTQ</sequence>
<comment type="function">
    <text evidence="1">Could be involved in insertion of integral membrane proteins into the membrane.</text>
</comment>
<comment type="subcellular location">
    <subcellularLocation>
        <location evidence="1">Cell inner membrane</location>
        <topology evidence="1">Peripheral membrane protein</topology>
        <orientation evidence="1">Cytoplasmic side</orientation>
    </subcellularLocation>
</comment>
<comment type="similarity">
    <text evidence="1">Belongs to the UPF0161 family.</text>
</comment>
<reference key="1">
    <citation type="journal article" date="2003" name="Proc. Natl. Acad. Sci. U.S.A.">
        <title>The genome sequence of Blochmannia floridanus: comparative analysis of reduced genomes.</title>
        <authorList>
            <person name="Gil R."/>
            <person name="Silva F.J."/>
            <person name="Zientz E."/>
            <person name="Delmotte F."/>
            <person name="Gonzalez-Candelas F."/>
            <person name="Latorre A."/>
            <person name="Rausell C."/>
            <person name="Kamerbeek J."/>
            <person name="Gadau J."/>
            <person name="Hoelldobler B."/>
            <person name="van Ham R.C.H.J."/>
            <person name="Gross R."/>
            <person name="Moya A."/>
        </authorList>
    </citation>
    <scope>NUCLEOTIDE SEQUENCE [LARGE SCALE GENOMIC DNA]</scope>
</reference>